<proteinExistence type="inferred from homology"/>
<protein>
    <recommendedName>
        <fullName evidence="1">Translational regulator CsrA</fullName>
    </recommendedName>
    <alternativeName>
        <fullName evidence="1">Carbon storage regulator</fullName>
    </alternativeName>
</protein>
<organism>
    <name type="scientific">Salmonella paratyphi A (strain ATCC 9150 / SARB42)</name>
    <dbReference type="NCBI Taxonomy" id="295319"/>
    <lineage>
        <taxon>Bacteria</taxon>
        <taxon>Pseudomonadati</taxon>
        <taxon>Pseudomonadota</taxon>
        <taxon>Gammaproteobacteria</taxon>
        <taxon>Enterobacterales</taxon>
        <taxon>Enterobacteriaceae</taxon>
        <taxon>Salmonella</taxon>
    </lineage>
</organism>
<accession>Q5PF18</accession>
<gene>
    <name evidence="1" type="primary">csrA</name>
    <name type="ordered locus">SPA2684</name>
</gene>
<dbReference type="EMBL" id="CP000026">
    <property type="protein sequence ID" value="AAV78541.1"/>
    <property type="molecule type" value="Genomic_DNA"/>
</dbReference>
<dbReference type="RefSeq" id="WP_000906486.1">
    <property type="nucleotide sequence ID" value="NC_006511.1"/>
</dbReference>
<dbReference type="SMR" id="Q5PF18"/>
<dbReference type="GeneID" id="98389839"/>
<dbReference type="KEGG" id="spt:SPA2684"/>
<dbReference type="HOGENOM" id="CLU_164837_2_1_6"/>
<dbReference type="Proteomes" id="UP000008185">
    <property type="component" value="Chromosome"/>
</dbReference>
<dbReference type="GO" id="GO:0005829">
    <property type="term" value="C:cytosol"/>
    <property type="evidence" value="ECO:0007669"/>
    <property type="project" value="TreeGrafter"/>
</dbReference>
<dbReference type="GO" id="GO:0048027">
    <property type="term" value="F:mRNA 5'-UTR binding"/>
    <property type="evidence" value="ECO:0007669"/>
    <property type="project" value="UniProtKB-UniRule"/>
</dbReference>
<dbReference type="GO" id="GO:0006402">
    <property type="term" value="P:mRNA catabolic process"/>
    <property type="evidence" value="ECO:0007669"/>
    <property type="project" value="InterPro"/>
</dbReference>
<dbReference type="GO" id="GO:0045947">
    <property type="term" value="P:negative regulation of translational initiation"/>
    <property type="evidence" value="ECO:0007669"/>
    <property type="project" value="UniProtKB-UniRule"/>
</dbReference>
<dbReference type="GO" id="GO:0045948">
    <property type="term" value="P:positive regulation of translational initiation"/>
    <property type="evidence" value="ECO:0007669"/>
    <property type="project" value="UniProtKB-UniRule"/>
</dbReference>
<dbReference type="GO" id="GO:0006109">
    <property type="term" value="P:regulation of carbohydrate metabolic process"/>
    <property type="evidence" value="ECO:0007669"/>
    <property type="project" value="UniProtKB-UniRule"/>
</dbReference>
<dbReference type="FunFam" id="2.60.40.4380:FF:000001">
    <property type="entry name" value="Translational regulator CsrA"/>
    <property type="match status" value="1"/>
</dbReference>
<dbReference type="Gene3D" id="2.60.40.4380">
    <property type="entry name" value="Translational regulator CsrA"/>
    <property type="match status" value="1"/>
</dbReference>
<dbReference type="HAMAP" id="MF_00167">
    <property type="entry name" value="CsrA"/>
    <property type="match status" value="1"/>
</dbReference>
<dbReference type="InterPro" id="IPR003751">
    <property type="entry name" value="CsrA"/>
</dbReference>
<dbReference type="InterPro" id="IPR036107">
    <property type="entry name" value="CsrA_sf"/>
</dbReference>
<dbReference type="NCBIfam" id="TIGR00202">
    <property type="entry name" value="csrA"/>
    <property type="match status" value="1"/>
</dbReference>
<dbReference type="NCBIfam" id="NF002469">
    <property type="entry name" value="PRK01712.1"/>
    <property type="match status" value="1"/>
</dbReference>
<dbReference type="PANTHER" id="PTHR34984">
    <property type="entry name" value="CARBON STORAGE REGULATOR"/>
    <property type="match status" value="1"/>
</dbReference>
<dbReference type="PANTHER" id="PTHR34984:SF1">
    <property type="entry name" value="CARBON STORAGE REGULATOR"/>
    <property type="match status" value="1"/>
</dbReference>
<dbReference type="Pfam" id="PF02599">
    <property type="entry name" value="CsrA"/>
    <property type="match status" value="1"/>
</dbReference>
<dbReference type="SUPFAM" id="SSF117130">
    <property type="entry name" value="CsrA-like"/>
    <property type="match status" value="1"/>
</dbReference>
<feature type="chain" id="PRO_1000023414" description="Translational regulator CsrA">
    <location>
        <begin position="1"/>
        <end position="61"/>
    </location>
</feature>
<keyword id="KW-0010">Activator</keyword>
<keyword id="KW-0963">Cytoplasm</keyword>
<keyword id="KW-0678">Repressor</keyword>
<keyword id="KW-0694">RNA-binding</keyword>
<keyword id="KW-0810">Translation regulation</keyword>
<comment type="function">
    <text evidence="1">A key translational regulator that binds mRNA to regulate translation initiation and/or mRNA stability. Mediates global changes in gene expression, shifting from rapid growth to stress survival by linking envelope stress, the stringent response and the catabolite repression systems. Usually binds in the 5'-UTR; binding at or near the Shine-Dalgarno sequence prevents ribosome-binding, repressing translation, binding elsewhere in the 5'-UTR can activate translation and/or stabilize the mRNA. Its function is antagonized by small RNA(s).</text>
</comment>
<comment type="subunit">
    <text evidence="1">Homodimer; the beta-strands of each monomer intercalate to form a hydrophobic core, while the alpha-helices form wings that extend away from the core.</text>
</comment>
<comment type="subcellular location">
    <subcellularLocation>
        <location evidence="1">Cytoplasm</location>
    </subcellularLocation>
</comment>
<comment type="similarity">
    <text evidence="1">Belongs to the CsrA/RsmA family.</text>
</comment>
<name>CSRA_SALPA</name>
<reference key="1">
    <citation type="journal article" date="2004" name="Nat. Genet.">
        <title>Comparison of genome degradation in Paratyphi A and Typhi, human-restricted serovars of Salmonella enterica that cause typhoid.</title>
        <authorList>
            <person name="McClelland M."/>
            <person name="Sanderson K.E."/>
            <person name="Clifton S.W."/>
            <person name="Latreille P."/>
            <person name="Porwollik S."/>
            <person name="Sabo A."/>
            <person name="Meyer R."/>
            <person name="Bieri T."/>
            <person name="Ozersky P."/>
            <person name="McLellan M."/>
            <person name="Harkins C.R."/>
            <person name="Wang C."/>
            <person name="Nguyen C."/>
            <person name="Berghoff A."/>
            <person name="Elliott G."/>
            <person name="Kohlberg S."/>
            <person name="Strong C."/>
            <person name="Du F."/>
            <person name="Carter J."/>
            <person name="Kremizki C."/>
            <person name="Layman D."/>
            <person name="Leonard S."/>
            <person name="Sun H."/>
            <person name="Fulton L."/>
            <person name="Nash W."/>
            <person name="Miner T."/>
            <person name="Minx P."/>
            <person name="Delehaunty K."/>
            <person name="Fronick C."/>
            <person name="Magrini V."/>
            <person name="Nhan M."/>
            <person name="Warren W."/>
            <person name="Florea L."/>
            <person name="Spieth J."/>
            <person name="Wilson R.K."/>
        </authorList>
    </citation>
    <scope>NUCLEOTIDE SEQUENCE [LARGE SCALE GENOMIC DNA]</scope>
    <source>
        <strain>ATCC 9150 / SARB42</strain>
    </source>
</reference>
<sequence>MLILTRRVGETLMIGDEVTVTVLGVKGNQVRIGVNAPKEVSVHREEIYQRIQAEKSQQSSY</sequence>
<evidence type="ECO:0000255" key="1">
    <source>
        <dbReference type="HAMAP-Rule" id="MF_00167"/>
    </source>
</evidence>